<keyword id="KW-0068">Autocatalytic cleavage</keyword>
<keyword id="KW-0227">DNA damage</keyword>
<keyword id="KW-0234">DNA repair</keyword>
<keyword id="KW-0235">DNA replication</keyword>
<keyword id="KW-0238">DNA-binding</keyword>
<keyword id="KW-0378">Hydrolase</keyword>
<keyword id="KW-1185">Reference proteome</keyword>
<keyword id="KW-0678">Repressor</keyword>
<keyword id="KW-0742">SOS response</keyword>
<keyword id="KW-0804">Transcription</keyword>
<keyword id="KW-0805">Transcription regulation</keyword>
<gene>
    <name evidence="1" type="primary">lexA1</name>
    <name type="synonym">lexA</name>
    <name type="synonym">lexA-1</name>
    <name type="ordered locus">PP_2143</name>
</gene>
<comment type="function">
    <text evidence="1">Represses a number of genes involved in the response to DNA damage (SOS response), including recA and lexA. In the presence of single-stranded DNA, RecA interacts with LexA causing an autocatalytic cleavage which disrupts the DNA-binding part of LexA, leading to derepression of the SOS regulon and eventually DNA repair.</text>
</comment>
<comment type="catalytic activity">
    <reaction evidence="1">
        <text>Hydrolysis of Ala-|-Gly bond in repressor LexA.</text>
        <dbReference type="EC" id="3.4.21.88"/>
    </reaction>
</comment>
<comment type="subunit">
    <text evidence="1">Homodimer.</text>
</comment>
<comment type="similarity">
    <text evidence="1">Belongs to the peptidase S24 family.</text>
</comment>
<proteinExistence type="inferred from homology"/>
<protein>
    <recommendedName>
        <fullName evidence="1">LexA repressor 1</fullName>
        <ecNumber evidence="1">3.4.21.88</ecNumber>
    </recommendedName>
</protein>
<name>LEXA1_PSEPK</name>
<feature type="chain" id="PRO_0000170069" description="LexA repressor 1">
    <location>
        <begin position="1"/>
        <end position="202"/>
    </location>
</feature>
<feature type="DNA-binding region" description="H-T-H motif" evidence="1">
    <location>
        <begin position="28"/>
        <end position="48"/>
    </location>
</feature>
<feature type="active site" description="For autocatalytic cleavage activity" evidence="1">
    <location>
        <position position="123"/>
    </location>
</feature>
<feature type="active site" description="For autocatalytic cleavage activity" evidence="1">
    <location>
        <position position="160"/>
    </location>
</feature>
<feature type="site" description="Cleavage; by autolysis" evidence="1">
    <location>
        <begin position="88"/>
        <end position="89"/>
    </location>
</feature>
<evidence type="ECO:0000255" key="1">
    <source>
        <dbReference type="HAMAP-Rule" id="MF_00015"/>
    </source>
</evidence>
<accession>P0A153</accession>
<accession>P37453</accession>
<accession>Q9EUU0</accession>
<dbReference type="EC" id="3.4.21.88" evidence="1"/>
<dbReference type="EMBL" id="AE015451">
    <property type="protein sequence ID" value="AAN67756.1"/>
    <property type="molecule type" value="Genomic_DNA"/>
</dbReference>
<dbReference type="RefSeq" id="NP_744292.1">
    <property type="nucleotide sequence ID" value="NC_002947.4"/>
</dbReference>
<dbReference type="RefSeq" id="WP_010953131.1">
    <property type="nucleotide sequence ID" value="NZ_CP169744.1"/>
</dbReference>
<dbReference type="SMR" id="P0A153"/>
<dbReference type="STRING" id="160488.PP_2143"/>
<dbReference type="MEROPS" id="S24.001"/>
<dbReference type="PaxDb" id="160488-PP_2143"/>
<dbReference type="GeneID" id="83681336"/>
<dbReference type="KEGG" id="ppu:PP_2143"/>
<dbReference type="PATRIC" id="fig|160488.4.peg.2260"/>
<dbReference type="eggNOG" id="COG1974">
    <property type="taxonomic scope" value="Bacteria"/>
</dbReference>
<dbReference type="HOGENOM" id="CLU_066192_45_3_6"/>
<dbReference type="OrthoDB" id="9802364at2"/>
<dbReference type="PhylomeDB" id="P0A153"/>
<dbReference type="BioCyc" id="PPUT160488:G1G01-2284-MONOMER"/>
<dbReference type="Proteomes" id="UP000000556">
    <property type="component" value="Chromosome"/>
</dbReference>
<dbReference type="CollecTF" id="EXPREG_00000710"/>
<dbReference type="GO" id="GO:0003677">
    <property type="term" value="F:DNA binding"/>
    <property type="evidence" value="ECO:0007669"/>
    <property type="project" value="UniProtKB-UniRule"/>
</dbReference>
<dbReference type="GO" id="GO:0004252">
    <property type="term" value="F:serine-type endopeptidase activity"/>
    <property type="evidence" value="ECO:0007669"/>
    <property type="project" value="UniProtKB-UniRule"/>
</dbReference>
<dbReference type="GO" id="GO:0006281">
    <property type="term" value="P:DNA repair"/>
    <property type="evidence" value="ECO:0007669"/>
    <property type="project" value="UniProtKB-UniRule"/>
</dbReference>
<dbReference type="GO" id="GO:0006260">
    <property type="term" value="P:DNA replication"/>
    <property type="evidence" value="ECO:0007669"/>
    <property type="project" value="UniProtKB-UniRule"/>
</dbReference>
<dbReference type="GO" id="GO:0045892">
    <property type="term" value="P:negative regulation of DNA-templated transcription"/>
    <property type="evidence" value="ECO:0000269"/>
    <property type="project" value="CollecTF"/>
</dbReference>
<dbReference type="GO" id="GO:0006508">
    <property type="term" value="P:proteolysis"/>
    <property type="evidence" value="ECO:0007669"/>
    <property type="project" value="InterPro"/>
</dbReference>
<dbReference type="GO" id="GO:0009432">
    <property type="term" value="P:SOS response"/>
    <property type="evidence" value="ECO:0007669"/>
    <property type="project" value="UniProtKB-UniRule"/>
</dbReference>
<dbReference type="CDD" id="cd06529">
    <property type="entry name" value="S24_LexA-like"/>
    <property type="match status" value="1"/>
</dbReference>
<dbReference type="FunFam" id="1.10.10.10:FF:000009">
    <property type="entry name" value="LexA repressor"/>
    <property type="match status" value="1"/>
</dbReference>
<dbReference type="FunFam" id="2.10.109.10:FF:000001">
    <property type="entry name" value="LexA repressor"/>
    <property type="match status" value="1"/>
</dbReference>
<dbReference type="Gene3D" id="2.10.109.10">
    <property type="entry name" value="Umud Fragment, subunit A"/>
    <property type="match status" value="1"/>
</dbReference>
<dbReference type="Gene3D" id="1.10.10.10">
    <property type="entry name" value="Winged helix-like DNA-binding domain superfamily/Winged helix DNA-binding domain"/>
    <property type="match status" value="1"/>
</dbReference>
<dbReference type="HAMAP" id="MF_00015">
    <property type="entry name" value="LexA"/>
    <property type="match status" value="1"/>
</dbReference>
<dbReference type="InterPro" id="IPR006200">
    <property type="entry name" value="LexA"/>
</dbReference>
<dbReference type="InterPro" id="IPR039418">
    <property type="entry name" value="LexA-like"/>
</dbReference>
<dbReference type="InterPro" id="IPR036286">
    <property type="entry name" value="LexA/Signal_pep-like_sf"/>
</dbReference>
<dbReference type="InterPro" id="IPR006199">
    <property type="entry name" value="LexA_DNA-bd_dom"/>
</dbReference>
<dbReference type="InterPro" id="IPR050077">
    <property type="entry name" value="LexA_repressor"/>
</dbReference>
<dbReference type="InterPro" id="IPR006197">
    <property type="entry name" value="Peptidase_S24_LexA"/>
</dbReference>
<dbReference type="InterPro" id="IPR015927">
    <property type="entry name" value="Peptidase_S24_S26A/B/C"/>
</dbReference>
<dbReference type="InterPro" id="IPR036388">
    <property type="entry name" value="WH-like_DNA-bd_sf"/>
</dbReference>
<dbReference type="InterPro" id="IPR036390">
    <property type="entry name" value="WH_DNA-bd_sf"/>
</dbReference>
<dbReference type="NCBIfam" id="TIGR00498">
    <property type="entry name" value="lexA"/>
    <property type="match status" value="1"/>
</dbReference>
<dbReference type="PANTHER" id="PTHR33516">
    <property type="entry name" value="LEXA REPRESSOR"/>
    <property type="match status" value="1"/>
</dbReference>
<dbReference type="PANTHER" id="PTHR33516:SF2">
    <property type="entry name" value="LEXA REPRESSOR-RELATED"/>
    <property type="match status" value="1"/>
</dbReference>
<dbReference type="Pfam" id="PF01726">
    <property type="entry name" value="LexA_DNA_bind"/>
    <property type="match status" value="1"/>
</dbReference>
<dbReference type="Pfam" id="PF00717">
    <property type="entry name" value="Peptidase_S24"/>
    <property type="match status" value="1"/>
</dbReference>
<dbReference type="PRINTS" id="PR00726">
    <property type="entry name" value="LEXASERPTASE"/>
</dbReference>
<dbReference type="SUPFAM" id="SSF51306">
    <property type="entry name" value="LexA/Signal peptidase"/>
    <property type="match status" value="1"/>
</dbReference>
<dbReference type="SUPFAM" id="SSF46785">
    <property type="entry name" value="Winged helix' DNA-binding domain"/>
    <property type="match status" value="1"/>
</dbReference>
<organism>
    <name type="scientific">Pseudomonas putida (strain ATCC 47054 / DSM 6125 / CFBP 8728 / NCIMB 11950 / KT2440)</name>
    <dbReference type="NCBI Taxonomy" id="160488"/>
    <lineage>
        <taxon>Bacteria</taxon>
        <taxon>Pseudomonadati</taxon>
        <taxon>Pseudomonadota</taxon>
        <taxon>Gammaproteobacteria</taxon>
        <taxon>Pseudomonadales</taxon>
        <taxon>Pseudomonadaceae</taxon>
        <taxon>Pseudomonas</taxon>
    </lineage>
</organism>
<reference key="1">
    <citation type="journal article" date="2002" name="Environ. Microbiol.">
        <title>Complete genome sequence and comparative analysis of the metabolically versatile Pseudomonas putida KT2440.</title>
        <authorList>
            <person name="Nelson K.E."/>
            <person name="Weinel C."/>
            <person name="Paulsen I.T."/>
            <person name="Dodson R.J."/>
            <person name="Hilbert H."/>
            <person name="Martins dos Santos V.A.P."/>
            <person name="Fouts D.E."/>
            <person name="Gill S.R."/>
            <person name="Pop M."/>
            <person name="Holmes M."/>
            <person name="Brinkac L.M."/>
            <person name="Beanan M.J."/>
            <person name="DeBoy R.T."/>
            <person name="Daugherty S.C."/>
            <person name="Kolonay J.F."/>
            <person name="Madupu R."/>
            <person name="Nelson W.C."/>
            <person name="White O."/>
            <person name="Peterson J.D."/>
            <person name="Khouri H.M."/>
            <person name="Hance I."/>
            <person name="Chris Lee P."/>
            <person name="Holtzapple E.K."/>
            <person name="Scanlan D."/>
            <person name="Tran K."/>
            <person name="Moazzez A."/>
            <person name="Utterback T.R."/>
            <person name="Rizzo M."/>
            <person name="Lee K."/>
            <person name="Kosack D."/>
            <person name="Moestl D."/>
            <person name="Wedler H."/>
            <person name="Lauber J."/>
            <person name="Stjepandic D."/>
            <person name="Hoheisel J."/>
            <person name="Straetz M."/>
            <person name="Heim S."/>
            <person name="Kiewitz C."/>
            <person name="Eisen J.A."/>
            <person name="Timmis K.N."/>
            <person name="Duesterhoeft A."/>
            <person name="Tuemmler B."/>
            <person name="Fraser C.M."/>
        </authorList>
    </citation>
    <scope>NUCLEOTIDE SEQUENCE [LARGE SCALE GENOMIC DNA]</scope>
    <source>
        <strain>ATCC 47054 / DSM 6125 / CFBP 8728 / NCIMB 11950 / KT2440</strain>
    </source>
</reference>
<sequence length="202" mass="22148">MLKLTPRQAEILAFIKRCLEDNGFPPTRAEIAQELGFKSPNAAEEHLKALARKGAIEMTPGASRGIRIPGLEAKAEEAGLPIIGRVAAGAPILAEQHIEQSCNINPAFFHPQADYLLRVHGMSMKDVGIFDGDLLAVHTCREARNGQIVVARIGDEVTVKRFKREGSKVWLLAENPEFAPIEVDLKEQELVIEGLSVGVIRR</sequence>